<gene>
    <name type="primary">ND5</name>
</gene>
<feature type="chain" id="PRO_0000118105" description="NADH-ubiquinone oxidoreductase chain 5">
    <location>
        <begin position="1" status="less than"/>
        <end position="101"/>
    </location>
</feature>
<feature type="transmembrane region" description="Helical" evidence="2">
    <location>
        <begin position="12"/>
        <end position="32"/>
    </location>
</feature>
<feature type="transmembrane region" description="Helical" evidence="2">
    <location>
        <begin position="48"/>
        <end position="68"/>
    </location>
</feature>
<feature type="transmembrane region" description="Helical" evidence="2">
    <location>
        <begin position="79"/>
        <end position="99"/>
    </location>
</feature>
<feature type="non-terminal residue">
    <location>
        <position position="1"/>
    </location>
</feature>
<comment type="function">
    <text evidence="1">Core subunit of the mitochondrial membrane respiratory chain NADH dehydrogenase (Complex I) that is believed to belong to the minimal assembly required for catalysis. Complex I functions in the transfer of electrons from NADH to the respiratory chain. The immediate electron acceptor for the enzyme is believed to be ubiquinone (By similarity).</text>
</comment>
<comment type="catalytic activity">
    <reaction>
        <text>a ubiquinone + NADH + 5 H(+)(in) = a ubiquinol + NAD(+) + 4 H(+)(out)</text>
        <dbReference type="Rhea" id="RHEA:29091"/>
        <dbReference type="Rhea" id="RHEA-COMP:9565"/>
        <dbReference type="Rhea" id="RHEA-COMP:9566"/>
        <dbReference type="ChEBI" id="CHEBI:15378"/>
        <dbReference type="ChEBI" id="CHEBI:16389"/>
        <dbReference type="ChEBI" id="CHEBI:17976"/>
        <dbReference type="ChEBI" id="CHEBI:57540"/>
        <dbReference type="ChEBI" id="CHEBI:57945"/>
        <dbReference type="EC" id="7.1.1.2"/>
    </reaction>
</comment>
<comment type="subcellular location">
    <subcellularLocation>
        <location evidence="1">Mitochondrion inner membrane</location>
        <topology evidence="1">Multi-pass membrane protein</topology>
    </subcellularLocation>
</comment>
<comment type="similarity">
    <text evidence="3">Belongs to the complex I subunit 5 family.</text>
</comment>
<reference key="1">
    <citation type="journal article" date="1987" name="J. Biol. Chem.">
        <title>Comparison of the maxicircle (mitochondrial) genomes of Leishmania tarentolae and Trypanosoma brucei at the level of nucleotide sequence.</title>
        <authorList>
            <person name="Simpson L."/>
            <person name="Neckelmann N."/>
            <person name="de la Cruz V.F."/>
            <person name="Simpson A.M."/>
            <person name="Feagin J.E."/>
            <person name="Jasmer D.P."/>
            <person name="Stuart K."/>
        </authorList>
    </citation>
    <scope>NUCLEOTIDE SEQUENCE</scope>
</reference>
<protein>
    <recommendedName>
        <fullName>NADH-ubiquinone oxidoreductase chain 5</fullName>
        <ecNumber>7.1.1.2</ecNumber>
    </recommendedName>
    <alternativeName>
        <fullName>NADH dehydrogenase subunit 5</fullName>
    </alternativeName>
</protein>
<accession>P15583</accession>
<evidence type="ECO:0000250" key="1"/>
<evidence type="ECO:0000255" key="2"/>
<evidence type="ECO:0000305" key="3"/>
<geneLocation type="mitochondrion"/>
<proteinExistence type="inferred from homology"/>
<dbReference type="EC" id="7.1.1.2"/>
<dbReference type="PIR" id="A26696">
    <property type="entry name" value="A26696"/>
</dbReference>
<dbReference type="GO" id="GO:0005743">
    <property type="term" value="C:mitochondrial inner membrane"/>
    <property type="evidence" value="ECO:0007669"/>
    <property type="project" value="UniProtKB-SubCell"/>
</dbReference>
<dbReference type="GO" id="GO:0008137">
    <property type="term" value="F:NADH dehydrogenase (ubiquinone) activity"/>
    <property type="evidence" value="ECO:0007669"/>
    <property type="project" value="UniProtKB-EC"/>
</dbReference>
<sequence length="101" mass="12869">SFYLYYASFFDIALFTVFIIDIIKFYILSGVIFYFFNIDCIMFFWRVFLFITMGFLFFIFTTWYFICFYMYICMFIWNLVIYFRYNLKYCLFFCMLFIIYI</sequence>
<keyword id="KW-0249">Electron transport</keyword>
<keyword id="KW-0472">Membrane</keyword>
<keyword id="KW-0496">Mitochondrion</keyword>
<keyword id="KW-0999">Mitochondrion inner membrane</keyword>
<keyword id="KW-0520">NAD</keyword>
<keyword id="KW-0679">Respiratory chain</keyword>
<keyword id="KW-1278">Translocase</keyword>
<keyword id="KW-0812">Transmembrane</keyword>
<keyword id="KW-1133">Transmembrane helix</keyword>
<keyword id="KW-0813">Transport</keyword>
<keyword id="KW-0830">Ubiquinone</keyword>
<organism>
    <name type="scientific">Leishmania tarentolae</name>
    <name type="common">Sauroleishmania tarentolae</name>
    <dbReference type="NCBI Taxonomy" id="5689"/>
    <lineage>
        <taxon>Eukaryota</taxon>
        <taxon>Discoba</taxon>
        <taxon>Euglenozoa</taxon>
        <taxon>Kinetoplastea</taxon>
        <taxon>Metakinetoplastina</taxon>
        <taxon>Trypanosomatida</taxon>
        <taxon>Trypanosomatidae</taxon>
        <taxon>Leishmaniinae</taxon>
        <taxon>Leishmania</taxon>
        <taxon>lizard Leishmania</taxon>
    </lineage>
</organism>
<name>NU5M_LEITA</name>